<organism>
    <name type="scientific">Burkholderia mallei (strain SAVP1)</name>
    <dbReference type="NCBI Taxonomy" id="320388"/>
    <lineage>
        <taxon>Bacteria</taxon>
        <taxon>Pseudomonadati</taxon>
        <taxon>Pseudomonadota</taxon>
        <taxon>Betaproteobacteria</taxon>
        <taxon>Burkholderiales</taxon>
        <taxon>Burkholderiaceae</taxon>
        <taxon>Burkholderia</taxon>
        <taxon>pseudomallei group</taxon>
    </lineage>
</organism>
<protein>
    <recommendedName>
        <fullName evidence="1">Membrane protein insertase YidC</fullName>
    </recommendedName>
    <alternativeName>
        <fullName evidence="1">Foldase YidC</fullName>
    </alternativeName>
    <alternativeName>
        <fullName evidence="1">Membrane integrase YidC</fullName>
    </alternativeName>
    <alternativeName>
        <fullName evidence="1">Membrane protein YidC</fullName>
    </alternativeName>
</protein>
<gene>
    <name evidence="1" type="primary">yidC</name>
    <name type="ordered locus">BMASAVP1_A2844</name>
</gene>
<feature type="chain" id="PRO_1000070070" description="Membrane protein insertase YidC">
    <location>
        <begin position="1"/>
        <end position="558"/>
    </location>
</feature>
<feature type="transmembrane region" description="Helical" evidence="1">
    <location>
        <begin position="3"/>
        <end position="23"/>
    </location>
</feature>
<feature type="transmembrane region" description="Helical" evidence="1">
    <location>
        <begin position="364"/>
        <end position="384"/>
    </location>
</feature>
<feature type="transmembrane region" description="Helical" evidence="1">
    <location>
        <begin position="438"/>
        <end position="458"/>
    </location>
</feature>
<feature type="transmembrane region" description="Helical" evidence="1">
    <location>
        <begin position="477"/>
        <end position="497"/>
    </location>
</feature>
<feature type="transmembrane region" description="Helical" evidence="1">
    <location>
        <begin position="508"/>
        <end position="528"/>
    </location>
</feature>
<proteinExistence type="inferred from homology"/>
<dbReference type="EMBL" id="CP000526">
    <property type="protein sequence ID" value="ABM51523.1"/>
    <property type="molecule type" value="Genomic_DNA"/>
</dbReference>
<dbReference type="RefSeq" id="WP_004198813.1">
    <property type="nucleotide sequence ID" value="NC_008785.1"/>
</dbReference>
<dbReference type="SMR" id="A1V7D5"/>
<dbReference type="GeneID" id="92981062"/>
<dbReference type="KEGG" id="bmv:BMASAVP1_A2844"/>
<dbReference type="HOGENOM" id="CLU_016535_3_0_4"/>
<dbReference type="GO" id="GO:0005886">
    <property type="term" value="C:plasma membrane"/>
    <property type="evidence" value="ECO:0007669"/>
    <property type="project" value="UniProtKB-SubCell"/>
</dbReference>
<dbReference type="GO" id="GO:0032977">
    <property type="term" value="F:membrane insertase activity"/>
    <property type="evidence" value="ECO:0007669"/>
    <property type="project" value="InterPro"/>
</dbReference>
<dbReference type="GO" id="GO:0051205">
    <property type="term" value="P:protein insertion into membrane"/>
    <property type="evidence" value="ECO:0007669"/>
    <property type="project" value="TreeGrafter"/>
</dbReference>
<dbReference type="GO" id="GO:0015031">
    <property type="term" value="P:protein transport"/>
    <property type="evidence" value="ECO:0007669"/>
    <property type="project" value="UniProtKB-KW"/>
</dbReference>
<dbReference type="CDD" id="cd20070">
    <property type="entry name" value="5TM_YidC_Alb3"/>
    <property type="match status" value="1"/>
</dbReference>
<dbReference type="CDD" id="cd19961">
    <property type="entry name" value="EcYidC-like_peri"/>
    <property type="match status" value="1"/>
</dbReference>
<dbReference type="Gene3D" id="2.70.98.90">
    <property type="match status" value="1"/>
</dbReference>
<dbReference type="HAMAP" id="MF_01810">
    <property type="entry name" value="YidC_type1"/>
    <property type="match status" value="1"/>
</dbReference>
<dbReference type="InterPro" id="IPR019998">
    <property type="entry name" value="Membr_insert_YidC"/>
</dbReference>
<dbReference type="InterPro" id="IPR028053">
    <property type="entry name" value="Membr_insert_YidC_N"/>
</dbReference>
<dbReference type="InterPro" id="IPR001708">
    <property type="entry name" value="YidC/ALB3/OXA1/COX18"/>
</dbReference>
<dbReference type="InterPro" id="IPR028055">
    <property type="entry name" value="YidC/Oxa/ALB_C"/>
</dbReference>
<dbReference type="InterPro" id="IPR047196">
    <property type="entry name" value="YidC_ALB_C"/>
</dbReference>
<dbReference type="InterPro" id="IPR038221">
    <property type="entry name" value="YidC_periplasmic_sf"/>
</dbReference>
<dbReference type="NCBIfam" id="NF002352">
    <property type="entry name" value="PRK01318.1-3"/>
    <property type="match status" value="1"/>
</dbReference>
<dbReference type="NCBIfam" id="NF002353">
    <property type="entry name" value="PRK01318.1-4"/>
    <property type="match status" value="1"/>
</dbReference>
<dbReference type="NCBIfam" id="TIGR03593">
    <property type="entry name" value="yidC_nterm"/>
    <property type="match status" value="1"/>
</dbReference>
<dbReference type="NCBIfam" id="TIGR03592">
    <property type="entry name" value="yidC_oxa1_cterm"/>
    <property type="match status" value="1"/>
</dbReference>
<dbReference type="PANTHER" id="PTHR12428:SF65">
    <property type="entry name" value="CYTOCHROME C OXIDASE ASSEMBLY PROTEIN COX18, MITOCHONDRIAL"/>
    <property type="match status" value="1"/>
</dbReference>
<dbReference type="PANTHER" id="PTHR12428">
    <property type="entry name" value="OXA1"/>
    <property type="match status" value="1"/>
</dbReference>
<dbReference type="Pfam" id="PF02096">
    <property type="entry name" value="60KD_IMP"/>
    <property type="match status" value="1"/>
</dbReference>
<dbReference type="Pfam" id="PF14849">
    <property type="entry name" value="YidC_periplas"/>
    <property type="match status" value="1"/>
</dbReference>
<dbReference type="PRINTS" id="PR00701">
    <property type="entry name" value="60KDINNERMP"/>
</dbReference>
<dbReference type="PRINTS" id="PR01900">
    <property type="entry name" value="YIDCPROTEIN"/>
</dbReference>
<evidence type="ECO:0000255" key="1">
    <source>
        <dbReference type="HAMAP-Rule" id="MF_01810"/>
    </source>
</evidence>
<name>YIDC_BURMS</name>
<accession>A1V7D5</accession>
<sequence>MDIKRTVLWVIFFMSAVMLFDNWQRSHGRPSMFFPNVTQTNTASNATNGNGASGASAAAAANALPAAATGAAPATTAPAAQAQLVRFSTDVYNGEIDTRGGTLAKLTLTKAGDGKQPDLSVTLFDHTANHTYLARTGLLGGDFPNHNDVYAQVAGPTSLAADQNTLKLSFESPVKGGVKVVKTYTFTRGSYVIGVDTKIENVGAAPVTPSVYMELVRDNSSVETPMFSHTFLGPAVYTDQKHFQKITFGDIDKNKADYVTSADNGWIAMVQHYFASAWIPQSGAKRDIYVEKIDPTLYRVGVKQPVEAIAPGQSADVSARLFAGPEEERMLEGIAPGLELVKDYGWVTIIAKPLFWLLEKIHGFVGNWGWAIVLLTLLIKAVFFPLSAASYKSMARMKEITPRMQALRERFKSDPQKMNAALMELYKTEKVNPFGGCLPVVIQIPVFISLYWVLLASVEMRGAPWVLWIHDLSQRDPYFILPVLMAVSMFVQTKLNPTPPDPVQAKMMMFMPIAFSVMFFFFPAGLVLYYVVNNVLSIAQQYYITRTLGGAAAKKKAS</sequence>
<keyword id="KW-0997">Cell inner membrane</keyword>
<keyword id="KW-1003">Cell membrane</keyword>
<keyword id="KW-0143">Chaperone</keyword>
<keyword id="KW-0472">Membrane</keyword>
<keyword id="KW-0653">Protein transport</keyword>
<keyword id="KW-0812">Transmembrane</keyword>
<keyword id="KW-1133">Transmembrane helix</keyword>
<keyword id="KW-0813">Transport</keyword>
<reference key="1">
    <citation type="journal article" date="2010" name="Genome Biol. Evol.">
        <title>Continuing evolution of Burkholderia mallei through genome reduction and large-scale rearrangements.</title>
        <authorList>
            <person name="Losada L."/>
            <person name="Ronning C.M."/>
            <person name="DeShazer D."/>
            <person name="Woods D."/>
            <person name="Fedorova N."/>
            <person name="Kim H.S."/>
            <person name="Shabalina S.A."/>
            <person name="Pearson T.R."/>
            <person name="Brinkac L."/>
            <person name="Tan P."/>
            <person name="Nandi T."/>
            <person name="Crabtree J."/>
            <person name="Badger J."/>
            <person name="Beckstrom-Sternberg S."/>
            <person name="Saqib M."/>
            <person name="Schutzer S.E."/>
            <person name="Keim P."/>
            <person name="Nierman W.C."/>
        </authorList>
    </citation>
    <scope>NUCLEOTIDE SEQUENCE [LARGE SCALE GENOMIC DNA]</scope>
    <source>
        <strain>SAVP1</strain>
    </source>
</reference>
<comment type="function">
    <text evidence="1">Required for the insertion and/or proper folding and/or complex formation of integral membrane proteins into the membrane. Involved in integration of membrane proteins that insert both dependently and independently of the Sec translocase complex, as well as at least some lipoproteins. Aids folding of multispanning membrane proteins.</text>
</comment>
<comment type="subunit">
    <text evidence="1">Interacts with the Sec translocase complex via SecD. Specifically interacts with transmembrane segments of nascent integral membrane proteins during membrane integration.</text>
</comment>
<comment type="subcellular location">
    <subcellularLocation>
        <location evidence="1">Cell inner membrane</location>
        <topology evidence="1">Multi-pass membrane protein</topology>
    </subcellularLocation>
</comment>
<comment type="similarity">
    <text evidence="1">Belongs to the OXA1/ALB3/YidC family. Type 1 subfamily.</text>
</comment>